<name>HBSAG_HBVC8</name>
<reference key="1">
    <citation type="journal article" date="1992" name="Nucleic Acids Res.">
        <title>The complete nucleotide sequence of hepatitis B virus, subtype adr (SRADR) and phylogenetic analysis.</title>
        <authorList>
            <person name="Mukaide M."/>
        </authorList>
    </citation>
    <scope>NUCLEOTIDE SEQUENCE [GENOMIC DNA]</scope>
</reference>
<reference key="2">
    <citation type="journal article" date="1996" name="Intervirology">
        <title>Functions of the large hepatitis B virus surface protein in viral particle morphogenesis.</title>
        <authorList>
            <person name="Bruss V."/>
            <person name="Gerhardt E."/>
            <person name="Vieluf K."/>
            <person name="Wunderlich G."/>
        </authorList>
    </citation>
    <scope>REVIEW</scope>
</reference>
<reference key="3">
    <citation type="journal article" date="1998" name="Adv. Exp. Med. Biol.">
        <title>Role of glycan processing in hepatitis B virus envelope protein trafficking.</title>
        <authorList>
            <person name="Block T.M."/>
            <person name="Lu X."/>
            <person name="Mehta A."/>
            <person name="Park J."/>
            <person name="Blumberg B.S."/>
            <person name="Dwek R."/>
        </authorList>
    </citation>
    <scope>REVIEW</scope>
</reference>
<reference key="4">
    <citation type="journal article" date="2004" name="Virus Res.">
        <title>Envelopment of the hepatitis B virus nucleocapsid.</title>
        <authorList>
            <person name="Bruss V."/>
        </authorList>
    </citation>
    <scope>REVIEW</scope>
</reference>
<reference key="5">
    <citation type="journal article" date="2006" name="Cancer Sci.">
        <title>Hepatitis B virus pre-S mutants, endoplasmic reticulum stress and hepatocarcinogenesis.</title>
        <authorList>
            <person name="Wang H.C."/>
            <person name="Huang W."/>
            <person name="Lai M.D."/>
            <person name="Su I.J."/>
        </authorList>
    </citation>
    <scope>REVIEW</scope>
</reference>
<feature type="initiator methionine" description="Removed; by host" evidence="3">
    <location>
        <position position="1"/>
    </location>
</feature>
<feature type="chain" id="PRO_0000319083" description="Large envelope protein" evidence="3">
    <location>
        <begin position="2"/>
        <end position="389"/>
    </location>
</feature>
<feature type="topological domain" description="Intravirion; in internal conformation" evidence="3">
    <location>
        <begin position="2"/>
        <end position="242"/>
    </location>
</feature>
<feature type="topological domain" description="Virion surface; in external conformation" evidence="3">
    <location>
        <begin position="2"/>
        <end position="170"/>
    </location>
</feature>
<feature type="transmembrane region" description="Helical; Name=TM1; Note=In external conformation" evidence="3">
    <location>
        <begin position="171"/>
        <end position="191"/>
    </location>
</feature>
<feature type="topological domain" description="Intravirion; in external conformation" evidence="3">
    <location>
        <begin position="192"/>
        <end position="242"/>
    </location>
</feature>
<feature type="transmembrane region" description="Helical; Name=TM2" evidence="3">
    <location>
        <begin position="243"/>
        <end position="263"/>
    </location>
</feature>
<feature type="topological domain" description="Virion surface" evidence="3">
    <location>
        <begin position="264"/>
        <end position="337"/>
    </location>
</feature>
<feature type="transmembrane region" description="Helical" evidence="3">
    <location>
        <begin position="338"/>
        <end position="358"/>
    </location>
</feature>
<feature type="topological domain" description="Intravirion" evidence="3">
    <location>
        <begin position="359"/>
        <end position="364"/>
    </location>
</feature>
<feature type="transmembrane region" description="Helical; Name=TM3" evidence="3">
    <location>
        <begin position="365"/>
        <end position="387"/>
    </location>
</feature>
<feature type="topological domain" description="Virion surface" evidence="3">
    <location>
        <begin position="388"/>
        <end position="389"/>
    </location>
</feature>
<feature type="region of interest" description="Pre-S" evidence="3">
    <location>
        <begin position="2"/>
        <end position="163"/>
    </location>
</feature>
<feature type="region of interest" description="Pre-S1" evidence="3">
    <location>
        <begin position="2"/>
        <end position="108"/>
    </location>
</feature>
<feature type="region of interest" description="Disordered" evidence="4">
    <location>
        <begin position="74"/>
        <end position="105"/>
    </location>
</feature>
<feature type="region of interest" description="Pre-S2" evidence="3">
    <location>
        <begin position="109"/>
        <end position="163"/>
    </location>
</feature>
<feature type="compositionally biased region" description="Polar residues" evidence="4">
    <location>
        <begin position="85"/>
        <end position="95"/>
    </location>
</feature>
<feature type="lipid moiety-binding region" description="N-myristoyl glycine; by host" evidence="3">
    <location>
        <position position="2"/>
    </location>
</feature>
<feature type="glycosylation site" description="N-linked (GlcNAc...) asparagine; by host" evidence="3">
    <location>
        <position position="309"/>
    </location>
</feature>
<feature type="splice variant" id="VSP_031396" description="In isoform S." evidence="5">
    <location>
        <begin position="1"/>
        <end position="163"/>
    </location>
</feature>
<feature type="splice variant" id="VSP_031397" description="In isoform M." evidence="5">
    <location>
        <begin position="1"/>
        <end position="108"/>
    </location>
</feature>
<feature type="modified residue" description="N-acetylmethionine" evidence="1">
    <location sequence="Q81162-2">
        <position position="1"/>
    </location>
</feature>
<sequence length="389" mass="42570">MGTNLSVPNPLGFFPDHQLDPAFGANSNNPDWDFNPNKDQWPEANQVGAGAFGPGFTPPHGGLLGWSPQAQGILTTVPAAPPPASTNRQSGRQPTPISPPLRDSHPQAMQWNSTTFHQALLDPRVRGLYFPAGGSSSGTVNPVPTIVSPISSIFSRTGDPAPNMESTTSGFLGPLLVLQAGFFLLTRILTIPQSLDSWWTSLNFLGEAPTCPGQNSQSPTSNHSPTSCPPICPGYRWMCLRRFIIFLFILLLCLIFLLVLLDYQGMLPVCPLLPGTSTTSTGPCKTCTIPAQGTSMFPSCCCTKPSDGNCTCIPIPSSWAFARFLWEWASVRFSWLSLLVPFVQWFAGLSPTVWLSVIWMMWYWGPSLYNILSPFLPLLPIFFCLWVYI</sequence>
<comment type="function">
    <text evidence="3">The large envelope protein exists in two topological conformations, one which is termed 'external' or Le-HBsAg and the other 'internal' or Li-HBsAg. In its external conformation the protein attaches the virus to cell receptors and thereby initiating infection. This interaction determines the species specificity and liver tropism. This attachment induces virion internalization predominantly through caveolin-mediated endocytosis. The large envelope protein also assures fusion between virion membrane and endosomal membrane. In its internal conformation the protein plays a role in virion morphogenesis and mediates the contact with the nucleocapsid like a matrix protein.</text>
</comment>
<comment type="function">
    <text evidence="3">The middle envelope protein plays an important role in the budding of the virion. It is involved in the induction of budding in a nucleocapsid independent way. In this process the majority of envelope proteins bud to form subviral lipoprotein particles of 22 nm of diameter that do not contain a nucleocapsid.</text>
</comment>
<comment type="subunit">
    <molecule>Isoform L</molecule>
    <text evidence="2">In its internal form (Li-HBsAg), interacts with the capsid protein and with the isoform S. Interacts with host chaperone CANX.</text>
</comment>
<comment type="subunit">
    <molecule>Isoform M</molecule>
    <text evidence="2">Associates with host chaperone CANX through its pre-S2 N glycan; this association may be essential for isoform M proper secretion.</text>
</comment>
<comment type="subunit">
    <molecule>Isoform S</molecule>
    <text evidence="2">Interacts with isoform L. Interacts with the antigens of satellite virus HDV (HDVAgs); this interaction is required for encapsidation of HDV genomic RNA.</text>
</comment>
<comment type="subcellular location">
    <subcellularLocation>
        <location evidence="3">Virion membrane</location>
    </subcellularLocation>
</comment>
<comment type="alternative products">
    <event type="alternative splicing"/>
    <event type="alternative initiation"/>
    <isoform>
        <id>Q81162-1</id>
        <name>L</name>
        <name>Large envelope protein</name>
        <name>LHB</name>
        <name>L-HBsAg</name>
        <sequence type="displayed"/>
    </isoform>
    <isoform>
        <id>Q81162-2</id>
        <name>M</name>
        <name>Middle envelope protein</name>
        <name>MHB</name>
        <name>M-HBsAg</name>
        <sequence type="described" ref="VSP_031397"/>
    </isoform>
    <isoform>
        <id>Q81162-3</id>
        <name>S</name>
        <name>Small envelope protein</name>
        <name>SHB</name>
        <name>S-HBsAg</name>
        <sequence type="described" ref="VSP_031396"/>
    </isoform>
</comment>
<comment type="domain">
    <text evidence="3">The large envelope protein is synthesized with the pre-S region at the cytosolic side of the endoplasmic reticulum and, hence will be within the virion after budding. Therefore the pre-S region is not N-glycosylated. Later a post-translational translocation of N-terminal pre-S and TM1 domains occur in about 50% of proteins at the virion surface. These molecules change their topology by an unknown mechanism, resulting in exposure of pre-S region at virion surface. For isoform M in contrast, the pre-S2 region is translocated cotranslationally to the endoplasmic reticulum lumen and is N-glycosylated.</text>
</comment>
<comment type="PTM">
    <text evidence="1 3">Isoform M is N-terminally acetylated by host at a ratio of 90%, and N-glycosylated by host at the pre-S2 region.</text>
</comment>
<comment type="PTM">
    <text evidence="3">Myristoylated.</text>
</comment>
<comment type="biotechnology">
    <text>Systematic vaccination of individuals at risk of exposure to the virus has been the main method of controlling the morbidity and mortality associated with hepatitis B. The first hepatitis B vaccine was manufactured by the purification and inactivation of HBsAg obtained from the plasma of chronic hepatitis B virus carriers. The vaccine is now produced by recombinant DNA techniques and expression of the S isoform in yeast cells. The pre-S region do not seem to induce strong enough antigenic response.</text>
</comment>
<comment type="similarity">
    <text evidence="3">Belongs to the orthohepadnavirus major surface antigen family.</text>
</comment>
<comment type="sequence caution" evidence="5">
    <conflict type="erroneous initiation">
        <sequence resource="EMBL-CDS" id="BAA04069"/>
    </conflict>
</comment>
<accession>Q81162</accession>
<organism>
    <name type="scientific">Hepatitis B virus genotype C subtype adr (isolate Japan/A4/1994)</name>
    <name type="common">HBV-C</name>
    <dbReference type="NCBI Taxonomy" id="489470"/>
    <lineage>
        <taxon>Viruses</taxon>
        <taxon>Riboviria</taxon>
        <taxon>Pararnavirae</taxon>
        <taxon>Artverviricota</taxon>
        <taxon>Revtraviricetes</taxon>
        <taxon>Blubervirales</taxon>
        <taxon>Hepadnaviridae</taxon>
        <taxon>Orthohepadnavirus</taxon>
        <taxon>Hepatitis B virus</taxon>
        <taxon>hepatitis B virus genotype C</taxon>
    </lineage>
</organism>
<dbReference type="EMBL" id="D16665">
    <property type="protein sequence ID" value="BAA04069.1"/>
    <property type="status" value="ALT_INIT"/>
    <property type="molecule type" value="Genomic_DNA"/>
</dbReference>
<dbReference type="PIR" id="JQ2094">
    <property type="entry name" value="JQ2094"/>
</dbReference>
<dbReference type="PIR" id="JQ2095">
    <property type="entry name" value="JQ2095"/>
</dbReference>
<dbReference type="PIR" id="JQ2096">
    <property type="entry name" value="JQ2096"/>
</dbReference>
<dbReference type="PIR" id="JQ2097">
    <property type="entry name" value="JQ2097"/>
</dbReference>
<dbReference type="PIR" id="JQ2098">
    <property type="entry name" value="JQ2098"/>
</dbReference>
<dbReference type="PIR" id="JQ2099">
    <property type="entry name" value="JQ2099"/>
</dbReference>
<dbReference type="PIR" id="JQ2100">
    <property type="entry name" value="JQ2100"/>
</dbReference>
<dbReference type="PIR" id="JQ2101">
    <property type="entry name" value="JQ2101"/>
</dbReference>
<dbReference type="PIR" id="JQ2102">
    <property type="entry name" value="JQ2102"/>
</dbReference>
<dbReference type="PIR" id="JQ2106">
    <property type="entry name" value="JQ2106"/>
</dbReference>
<dbReference type="PIR" id="JQ2108">
    <property type="entry name" value="JQ2108"/>
</dbReference>
<dbReference type="PIR" id="JQ2109">
    <property type="entry name" value="JQ2109"/>
</dbReference>
<dbReference type="PIR" id="JQ2111">
    <property type="entry name" value="JQ2111"/>
</dbReference>
<dbReference type="PIR" id="JQ2112">
    <property type="entry name" value="JQ2112"/>
</dbReference>
<dbReference type="PIR" id="JQ2116">
    <property type="entry name" value="JQ2116"/>
</dbReference>
<dbReference type="BMRB" id="Q81162"/>
<dbReference type="SMR" id="Q81162"/>
<dbReference type="GlyCosmos" id="Q81162">
    <property type="glycosylation" value="1 site, No reported glycans"/>
</dbReference>
<dbReference type="Proteomes" id="UP000007926">
    <property type="component" value="Genome"/>
</dbReference>
<dbReference type="GO" id="GO:0016020">
    <property type="term" value="C:membrane"/>
    <property type="evidence" value="ECO:0007669"/>
    <property type="project" value="UniProtKB-UniRule"/>
</dbReference>
<dbReference type="GO" id="GO:0019031">
    <property type="term" value="C:viral envelope"/>
    <property type="evidence" value="ECO:0007669"/>
    <property type="project" value="UniProtKB-KW"/>
</dbReference>
<dbReference type="GO" id="GO:0055036">
    <property type="term" value="C:virion membrane"/>
    <property type="evidence" value="ECO:0007669"/>
    <property type="project" value="UniProtKB-SubCell"/>
</dbReference>
<dbReference type="GO" id="GO:0075513">
    <property type="term" value="P:caveolin-mediated endocytosis of virus by host cell"/>
    <property type="evidence" value="ECO:0007669"/>
    <property type="project" value="UniProtKB-KW"/>
</dbReference>
<dbReference type="GO" id="GO:0039654">
    <property type="term" value="P:fusion of virus membrane with host endosome membrane"/>
    <property type="evidence" value="ECO:0007669"/>
    <property type="project" value="UniProtKB-KW"/>
</dbReference>
<dbReference type="GO" id="GO:0019062">
    <property type="term" value="P:virion attachment to host cell"/>
    <property type="evidence" value="ECO:0007669"/>
    <property type="project" value="UniProtKB-UniRule"/>
</dbReference>
<dbReference type="HAMAP" id="MF_04075">
    <property type="entry name" value="HBV_HBSAG"/>
    <property type="match status" value="1"/>
</dbReference>
<dbReference type="InterPro" id="IPR000349">
    <property type="entry name" value="HBV_HBSAG"/>
</dbReference>
<dbReference type="Pfam" id="PF00695">
    <property type="entry name" value="vMSA"/>
    <property type="match status" value="1"/>
</dbReference>
<organismHost>
    <name type="scientific">Homo sapiens</name>
    <name type="common">Human</name>
    <dbReference type="NCBI Taxonomy" id="9606"/>
</organismHost>
<organismHost>
    <name type="scientific">Pan troglodytes</name>
    <name type="common">Chimpanzee</name>
    <dbReference type="NCBI Taxonomy" id="9598"/>
</organismHost>
<protein>
    <recommendedName>
        <fullName evidence="3">Large envelope protein</fullName>
    </recommendedName>
    <alternativeName>
        <fullName evidence="3">L glycoprotein</fullName>
    </alternativeName>
    <alternativeName>
        <fullName evidence="3">L-HBsAg</fullName>
        <shortName evidence="3">LHB</shortName>
    </alternativeName>
    <alternativeName>
        <fullName evidence="3">Large S protein</fullName>
    </alternativeName>
    <alternativeName>
        <fullName evidence="3">Large surface protein</fullName>
    </alternativeName>
    <alternativeName>
        <fullName evidence="3">Major surface antigen</fullName>
    </alternativeName>
</protein>
<proteinExistence type="evidence at protein level"/>
<keyword id="KW-0007">Acetylation</keyword>
<keyword id="KW-0024">Alternative initiation</keyword>
<keyword id="KW-0025">Alternative splicing</keyword>
<keyword id="KW-1166">Caveolin-mediated endocytosis of virus by host</keyword>
<keyword id="KW-1170">Fusion of virus membrane with host endosomal membrane</keyword>
<keyword id="KW-1168">Fusion of virus membrane with host membrane</keyword>
<keyword id="KW-0325">Glycoprotein</keyword>
<keyword id="KW-0945">Host-virus interaction</keyword>
<keyword id="KW-0449">Lipoprotein</keyword>
<keyword id="KW-0472">Membrane</keyword>
<keyword id="KW-0519">Myristate</keyword>
<keyword id="KW-0812">Transmembrane</keyword>
<keyword id="KW-1133">Transmembrane helix</keyword>
<keyword id="KW-1161">Viral attachment to host cell</keyword>
<keyword id="KW-0261">Viral envelope protein</keyword>
<keyword id="KW-1162">Viral penetration into host cytoplasm</keyword>
<keyword id="KW-0946">Virion</keyword>
<keyword id="KW-1164">Virus endocytosis by host</keyword>
<keyword id="KW-1160">Virus entry into host cell</keyword>
<evidence type="ECO:0000250" key="1">
    <source>
        <dbReference type="UniProtKB" id="P03138"/>
    </source>
</evidence>
<evidence type="ECO:0000250" key="2">
    <source>
        <dbReference type="UniProtKB" id="P03141"/>
    </source>
</evidence>
<evidence type="ECO:0000255" key="3">
    <source>
        <dbReference type="HAMAP-Rule" id="MF_04075"/>
    </source>
</evidence>
<evidence type="ECO:0000256" key="4">
    <source>
        <dbReference type="SAM" id="MobiDB-lite"/>
    </source>
</evidence>
<evidence type="ECO:0000305" key="5"/>
<gene>
    <name evidence="3" type="primary">S</name>
</gene>